<organism>
    <name type="scientific">Leptospira interrogans serogroup Icterohaemorrhagiae serovar Lai (strain 56601)</name>
    <dbReference type="NCBI Taxonomy" id="189518"/>
    <lineage>
        <taxon>Bacteria</taxon>
        <taxon>Pseudomonadati</taxon>
        <taxon>Spirochaetota</taxon>
        <taxon>Spirochaetia</taxon>
        <taxon>Leptospirales</taxon>
        <taxon>Leptospiraceae</taxon>
        <taxon>Leptospira</taxon>
    </lineage>
</organism>
<sequence>MGIEIQTKPFGKMQVSERQILSFPEGLLGFEEYKKFALIEEEEESVFKWLQSTEEVDLAFVVIPPSLFKKEYKPLIPEQELLGIGINEIKESLTLVIVTVPGEDPSMMTANTQGPILINKETLIGKQFISRNESHSVREKILESAAVEIG</sequence>
<keyword id="KW-1005">Bacterial flagellum biogenesis</keyword>
<keyword id="KW-0143">Chaperone</keyword>
<keyword id="KW-0963">Cytoplasm</keyword>
<keyword id="KW-1185">Reference proteome</keyword>
<keyword id="KW-0810">Translation regulation</keyword>
<evidence type="ECO:0000255" key="1">
    <source>
        <dbReference type="HAMAP-Rule" id="MF_01185"/>
    </source>
</evidence>
<dbReference type="EMBL" id="AE010300">
    <property type="protein sequence ID" value="AAN51505.1"/>
    <property type="molecule type" value="Genomic_DNA"/>
</dbReference>
<dbReference type="RefSeq" id="NP_714487.1">
    <property type="nucleotide sequence ID" value="NC_004342.2"/>
</dbReference>
<dbReference type="RefSeq" id="WP_000510650.1">
    <property type="nucleotide sequence ID" value="NC_004342.2"/>
</dbReference>
<dbReference type="SMR" id="Q8EYA9"/>
<dbReference type="STRING" id="189518.LA_4307"/>
<dbReference type="PaxDb" id="189518-LA_4307"/>
<dbReference type="EnsemblBacteria" id="AAN51505">
    <property type="protein sequence ID" value="AAN51505"/>
    <property type="gene ID" value="LA_4307"/>
</dbReference>
<dbReference type="KEGG" id="lil:LA_4307"/>
<dbReference type="PATRIC" id="fig|189518.3.peg.4276"/>
<dbReference type="HOGENOM" id="CLU_112356_0_2_12"/>
<dbReference type="InParanoid" id="Q8EYA9"/>
<dbReference type="OrthoDB" id="9801235at2"/>
<dbReference type="Proteomes" id="UP000001408">
    <property type="component" value="Chromosome I"/>
</dbReference>
<dbReference type="GO" id="GO:0005737">
    <property type="term" value="C:cytoplasm"/>
    <property type="evidence" value="ECO:0007669"/>
    <property type="project" value="UniProtKB-SubCell"/>
</dbReference>
<dbReference type="GO" id="GO:0044780">
    <property type="term" value="P:bacterial-type flagellum assembly"/>
    <property type="evidence" value="ECO:0007669"/>
    <property type="project" value="UniProtKB-UniRule"/>
</dbReference>
<dbReference type="GO" id="GO:0006417">
    <property type="term" value="P:regulation of translation"/>
    <property type="evidence" value="ECO:0007669"/>
    <property type="project" value="UniProtKB-KW"/>
</dbReference>
<dbReference type="Gene3D" id="2.30.290.10">
    <property type="entry name" value="BH3618-like"/>
    <property type="match status" value="1"/>
</dbReference>
<dbReference type="HAMAP" id="MF_01185">
    <property type="entry name" value="FliW"/>
    <property type="match status" value="1"/>
</dbReference>
<dbReference type="InterPro" id="IPR003775">
    <property type="entry name" value="Flagellar_assembly_factor_FliW"/>
</dbReference>
<dbReference type="InterPro" id="IPR024046">
    <property type="entry name" value="Flagellar_assmbl_FliW_dom_sf"/>
</dbReference>
<dbReference type="NCBIfam" id="NF009793">
    <property type="entry name" value="PRK13285.1-1"/>
    <property type="match status" value="1"/>
</dbReference>
<dbReference type="PANTHER" id="PTHR39190">
    <property type="entry name" value="FLAGELLAR ASSEMBLY FACTOR FLIW"/>
    <property type="match status" value="1"/>
</dbReference>
<dbReference type="PANTHER" id="PTHR39190:SF1">
    <property type="entry name" value="FLAGELLAR ASSEMBLY FACTOR FLIW"/>
    <property type="match status" value="1"/>
</dbReference>
<dbReference type="Pfam" id="PF02623">
    <property type="entry name" value="FliW"/>
    <property type="match status" value="1"/>
</dbReference>
<dbReference type="SUPFAM" id="SSF141457">
    <property type="entry name" value="BH3618-like"/>
    <property type="match status" value="1"/>
</dbReference>
<name>FLIW_LEPIN</name>
<accession>Q8EYA9</accession>
<proteinExistence type="inferred from homology"/>
<gene>
    <name evidence="1" type="primary">fliW</name>
    <name type="ordered locus">LA_4307</name>
</gene>
<protein>
    <recommendedName>
        <fullName evidence="1">Flagellar assembly factor FliW</fullName>
    </recommendedName>
</protein>
<feature type="chain" id="PRO_0000273002" description="Flagellar assembly factor FliW">
    <location>
        <begin position="1"/>
        <end position="150"/>
    </location>
</feature>
<reference key="1">
    <citation type="journal article" date="2003" name="Nature">
        <title>Unique physiological and pathogenic features of Leptospira interrogans revealed by whole-genome sequencing.</title>
        <authorList>
            <person name="Ren S.-X."/>
            <person name="Fu G."/>
            <person name="Jiang X.-G."/>
            <person name="Zeng R."/>
            <person name="Miao Y.-G."/>
            <person name="Xu H."/>
            <person name="Zhang Y.-X."/>
            <person name="Xiong H."/>
            <person name="Lu G."/>
            <person name="Lu L.-F."/>
            <person name="Jiang H.-Q."/>
            <person name="Jia J."/>
            <person name="Tu Y.-F."/>
            <person name="Jiang J.-X."/>
            <person name="Gu W.-Y."/>
            <person name="Zhang Y.-Q."/>
            <person name="Cai Z."/>
            <person name="Sheng H.-H."/>
            <person name="Yin H.-F."/>
            <person name="Zhang Y."/>
            <person name="Zhu G.-F."/>
            <person name="Wan M."/>
            <person name="Huang H.-L."/>
            <person name="Qian Z."/>
            <person name="Wang S.-Y."/>
            <person name="Ma W."/>
            <person name="Yao Z.-J."/>
            <person name="Shen Y."/>
            <person name="Qiang B.-Q."/>
            <person name="Xia Q.-C."/>
            <person name="Guo X.-K."/>
            <person name="Danchin A."/>
            <person name="Saint Girons I."/>
            <person name="Somerville R.L."/>
            <person name="Wen Y.-M."/>
            <person name="Shi M.-H."/>
            <person name="Chen Z."/>
            <person name="Xu J.-G."/>
            <person name="Zhao G.-P."/>
        </authorList>
    </citation>
    <scope>NUCLEOTIDE SEQUENCE [LARGE SCALE GENOMIC DNA]</scope>
    <source>
        <strain>56601</strain>
    </source>
</reference>
<comment type="function">
    <text evidence="1">Acts as an anti-CsrA protein, binds CsrA and prevents it from repressing translation of its target genes, one of which is flagellin. Binds to flagellin and participates in the assembly of the flagellum.</text>
</comment>
<comment type="subunit">
    <text evidence="1">Interacts with translational regulator CsrA and flagellin(s).</text>
</comment>
<comment type="subcellular location">
    <subcellularLocation>
        <location evidence="1">Cytoplasm</location>
    </subcellularLocation>
</comment>
<comment type="similarity">
    <text evidence="1">Belongs to the FliW family.</text>
</comment>